<gene>
    <name evidence="1" type="primary">ftsH4</name>
    <name type="ordered locus">sce7292</name>
</gene>
<name>FTSH4_SORC5</name>
<reference key="1">
    <citation type="journal article" date="2007" name="Nat. Biotechnol.">
        <title>Complete genome sequence of the myxobacterium Sorangium cellulosum.</title>
        <authorList>
            <person name="Schneiker S."/>
            <person name="Perlova O."/>
            <person name="Kaiser O."/>
            <person name="Gerth K."/>
            <person name="Alici A."/>
            <person name="Altmeyer M.O."/>
            <person name="Bartels D."/>
            <person name="Bekel T."/>
            <person name="Beyer S."/>
            <person name="Bode E."/>
            <person name="Bode H.B."/>
            <person name="Bolten C.J."/>
            <person name="Choudhuri J.V."/>
            <person name="Doss S."/>
            <person name="Elnakady Y.A."/>
            <person name="Frank B."/>
            <person name="Gaigalat L."/>
            <person name="Goesmann A."/>
            <person name="Groeger C."/>
            <person name="Gross F."/>
            <person name="Jelsbak L."/>
            <person name="Jelsbak L."/>
            <person name="Kalinowski J."/>
            <person name="Kegler C."/>
            <person name="Knauber T."/>
            <person name="Konietzny S."/>
            <person name="Kopp M."/>
            <person name="Krause L."/>
            <person name="Krug D."/>
            <person name="Linke B."/>
            <person name="Mahmud T."/>
            <person name="Martinez-Arias R."/>
            <person name="McHardy A.C."/>
            <person name="Merai M."/>
            <person name="Meyer F."/>
            <person name="Mormann S."/>
            <person name="Munoz-Dorado J."/>
            <person name="Perez J."/>
            <person name="Pradella S."/>
            <person name="Rachid S."/>
            <person name="Raddatz G."/>
            <person name="Rosenau F."/>
            <person name="Rueckert C."/>
            <person name="Sasse F."/>
            <person name="Scharfe M."/>
            <person name="Schuster S.C."/>
            <person name="Suen G."/>
            <person name="Treuner-Lange A."/>
            <person name="Velicer G.J."/>
            <person name="Vorholter F.-J."/>
            <person name="Weissman K.J."/>
            <person name="Welch R.D."/>
            <person name="Wenzel S.C."/>
            <person name="Whitworth D.E."/>
            <person name="Wilhelm S."/>
            <person name="Wittmann C."/>
            <person name="Bloecker H."/>
            <person name="Puehler A."/>
            <person name="Mueller R."/>
        </authorList>
    </citation>
    <scope>NUCLEOTIDE SEQUENCE [LARGE SCALE GENOMIC DNA]</scope>
    <source>
        <strain>So ce56</strain>
    </source>
</reference>
<keyword id="KW-0067">ATP-binding</keyword>
<keyword id="KW-0997">Cell inner membrane</keyword>
<keyword id="KW-1003">Cell membrane</keyword>
<keyword id="KW-0378">Hydrolase</keyword>
<keyword id="KW-0472">Membrane</keyword>
<keyword id="KW-0479">Metal-binding</keyword>
<keyword id="KW-0482">Metalloprotease</keyword>
<keyword id="KW-0547">Nucleotide-binding</keyword>
<keyword id="KW-0645">Protease</keyword>
<keyword id="KW-1185">Reference proteome</keyword>
<keyword id="KW-0812">Transmembrane</keyword>
<keyword id="KW-1133">Transmembrane helix</keyword>
<keyword id="KW-0862">Zinc</keyword>
<evidence type="ECO:0000255" key="1">
    <source>
        <dbReference type="HAMAP-Rule" id="MF_01458"/>
    </source>
</evidence>
<evidence type="ECO:0000256" key="2">
    <source>
        <dbReference type="SAM" id="MobiDB-lite"/>
    </source>
</evidence>
<sequence>MKQSHKTLLLWVLLIMMFLAIWQFLSPDSRPATQVAFSEFMAQVQVEAKDKDPHVESVTIKDREYTFWVKDPKSGTKTKKVTIGPDNADEITKTIVDNKVAVFFEKEDTSPFWPGAIMYLLPTVFLLVMFYLFMRQLQAGGGKAMSFGKSRARLLSEAQNKVTFADVAGIDEAKDELEEIIAFLKDPKKFQKLGGRIPKGVLMMGPPGTGKTLLARAIAGEAGVPFFSISGSDFVEMFVGVGASRVRDLFEQGKKHAPCIIFIDEIDAVGRHRGAGLGGGHDEREQTLNQLLVEMDGFESNEGVIIVAATNRPDVLDPAILRPGRFDRRIVVNRPDVRGREGILRVHTKKVPLGPDVDMEILARGTPGFVGADIENLVNEAALLAARQDKDVVSMVDFEMAKDKVLMGAERRSMVISDEEKRTTAYHEAGHALVAKLLEKFSDPVHKVTIIPRGPALGLTQQLPKEDRLSMSRDFAKARLSVLMGGRVAEEIVFGQFTTGAGNDIKQASNLARRMVTEFGMSDVIGPISYGADEESVFLGRDFTSRRRDYSETIANQIDDEVRRFILDAHAEARQLLTDNREILERLATALLERETLDAEEVDAIVGGRELPQRQRVVIPSYSDRDRAAKEKRRAASIFGTPKPAPST</sequence>
<proteinExistence type="inferred from homology"/>
<feature type="chain" id="PRO_0000400393" description="ATP-dependent zinc metalloprotease FtsH 4">
    <location>
        <begin position="1"/>
        <end position="648"/>
    </location>
</feature>
<feature type="topological domain" description="Cytoplasmic" evidence="1">
    <location>
        <begin position="1"/>
        <end position="6"/>
    </location>
</feature>
<feature type="transmembrane region" description="Helical" evidence="1">
    <location>
        <begin position="7"/>
        <end position="27"/>
    </location>
</feature>
<feature type="topological domain" description="Periplasmic" evidence="1">
    <location>
        <begin position="28"/>
        <end position="111"/>
    </location>
</feature>
<feature type="transmembrane region" description="Helical" evidence="1">
    <location>
        <begin position="112"/>
        <end position="132"/>
    </location>
</feature>
<feature type="topological domain" description="Cytoplasmic" evidence="1">
    <location>
        <begin position="133"/>
        <end position="648"/>
    </location>
</feature>
<feature type="region of interest" description="Disordered" evidence="2">
    <location>
        <begin position="622"/>
        <end position="648"/>
    </location>
</feature>
<feature type="active site" evidence="1">
    <location>
        <position position="428"/>
    </location>
</feature>
<feature type="binding site" evidence="1">
    <location>
        <begin position="205"/>
        <end position="212"/>
    </location>
    <ligand>
        <name>ATP</name>
        <dbReference type="ChEBI" id="CHEBI:30616"/>
    </ligand>
</feature>
<feature type="binding site" evidence="1">
    <location>
        <position position="427"/>
    </location>
    <ligand>
        <name>Zn(2+)</name>
        <dbReference type="ChEBI" id="CHEBI:29105"/>
        <note>catalytic</note>
    </ligand>
</feature>
<feature type="binding site" evidence="1">
    <location>
        <position position="431"/>
    </location>
    <ligand>
        <name>Zn(2+)</name>
        <dbReference type="ChEBI" id="CHEBI:29105"/>
        <note>catalytic</note>
    </ligand>
</feature>
<feature type="binding site" evidence="1">
    <location>
        <position position="504"/>
    </location>
    <ligand>
        <name>Zn(2+)</name>
        <dbReference type="ChEBI" id="CHEBI:29105"/>
        <note>catalytic</note>
    </ligand>
</feature>
<comment type="function">
    <text evidence="1">Acts as a processive, ATP-dependent zinc metallopeptidase for both cytoplasmic and membrane proteins. Plays a role in the quality control of integral membrane proteins.</text>
</comment>
<comment type="cofactor">
    <cofactor evidence="1">
        <name>Zn(2+)</name>
        <dbReference type="ChEBI" id="CHEBI:29105"/>
    </cofactor>
    <text evidence="1">Binds 1 zinc ion per subunit.</text>
</comment>
<comment type="subunit">
    <text evidence="1">Homohexamer.</text>
</comment>
<comment type="subcellular location">
    <subcellularLocation>
        <location evidence="1">Cell inner membrane</location>
        <topology evidence="1">Multi-pass membrane protein</topology>
        <orientation evidence="1">Cytoplasmic side</orientation>
    </subcellularLocation>
</comment>
<comment type="similarity">
    <text evidence="1">In the central section; belongs to the AAA ATPase family.</text>
</comment>
<comment type="similarity">
    <text evidence="1">In the C-terminal section; belongs to the peptidase M41 family.</text>
</comment>
<protein>
    <recommendedName>
        <fullName evidence="1">ATP-dependent zinc metalloprotease FtsH 4</fullName>
        <ecNumber evidence="1">3.4.24.-</ecNumber>
    </recommendedName>
</protein>
<organism>
    <name type="scientific">Sorangium cellulosum (strain So ce56)</name>
    <name type="common">Polyangium cellulosum (strain So ce56)</name>
    <dbReference type="NCBI Taxonomy" id="448385"/>
    <lineage>
        <taxon>Bacteria</taxon>
        <taxon>Pseudomonadati</taxon>
        <taxon>Myxococcota</taxon>
        <taxon>Polyangia</taxon>
        <taxon>Polyangiales</taxon>
        <taxon>Polyangiaceae</taxon>
        <taxon>Sorangium</taxon>
    </lineage>
</organism>
<accession>A9EXK6</accession>
<dbReference type="EC" id="3.4.24.-" evidence="1"/>
<dbReference type="EMBL" id="AM746676">
    <property type="protein sequence ID" value="CAN97461.1"/>
    <property type="molecule type" value="Genomic_DNA"/>
</dbReference>
<dbReference type="RefSeq" id="WP_012239900.1">
    <property type="nucleotide sequence ID" value="NC_010162.1"/>
</dbReference>
<dbReference type="SMR" id="A9EXK6"/>
<dbReference type="STRING" id="448385.sce7292"/>
<dbReference type="MEROPS" id="M41.001"/>
<dbReference type="KEGG" id="scl:sce7292"/>
<dbReference type="eggNOG" id="COG0465">
    <property type="taxonomic scope" value="Bacteria"/>
</dbReference>
<dbReference type="HOGENOM" id="CLU_000688_16_0_7"/>
<dbReference type="OrthoDB" id="9809379at2"/>
<dbReference type="BioCyc" id="SCEL448385:SCE_RS37350-MONOMER"/>
<dbReference type="Proteomes" id="UP000002139">
    <property type="component" value="Chromosome"/>
</dbReference>
<dbReference type="GO" id="GO:0005886">
    <property type="term" value="C:plasma membrane"/>
    <property type="evidence" value="ECO:0007669"/>
    <property type="project" value="UniProtKB-SubCell"/>
</dbReference>
<dbReference type="GO" id="GO:0005524">
    <property type="term" value="F:ATP binding"/>
    <property type="evidence" value="ECO:0007669"/>
    <property type="project" value="UniProtKB-UniRule"/>
</dbReference>
<dbReference type="GO" id="GO:0016887">
    <property type="term" value="F:ATP hydrolysis activity"/>
    <property type="evidence" value="ECO:0007669"/>
    <property type="project" value="UniProtKB-UniRule"/>
</dbReference>
<dbReference type="GO" id="GO:0004176">
    <property type="term" value="F:ATP-dependent peptidase activity"/>
    <property type="evidence" value="ECO:0007669"/>
    <property type="project" value="InterPro"/>
</dbReference>
<dbReference type="GO" id="GO:0004222">
    <property type="term" value="F:metalloendopeptidase activity"/>
    <property type="evidence" value="ECO:0007669"/>
    <property type="project" value="InterPro"/>
</dbReference>
<dbReference type="GO" id="GO:0008270">
    <property type="term" value="F:zinc ion binding"/>
    <property type="evidence" value="ECO:0007669"/>
    <property type="project" value="UniProtKB-UniRule"/>
</dbReference>
<dbReference type="GO" id="GO:0030163">
    <property type="term" value="P:protein catabolic process"/>
    <property type="evidence" value="ECO:0007669"/>
    <property type="project" value="UniProtKB-UniRule"/>
</dbReference>
<dbReference type="GO" id="GO:0006508">
    <property type="term" value="P:proteolysis"/>
    <property type="evidence" value="ECO:0007669"/>
    <property type="project" value="UniProtKB-KW"/>
</dbReference>
<dbReference type="CDD" id="cd19501">
    <property type="entry name" value="RecA-like_FtsH"/>
    <property type="match status" value="1"/>
</dbReference>
<dbReference type="FunFam" id="1.10.8.60:FF:000001">
    <property type="entry name" value="ATP-dependent zinc metalloprotease FtsH"/>
    <property type="match status" value="1"/>
</dbReference>
<dbReference type="FunFam" id="1.20.58.760:FF:000001">
    <property type="entry name" value="ATP-dependent zinc metalloprotease FtsH"/>
    <property type="match status" value="1"/>
</dbReference>
<dbReference type="FunFam" id="3.40.50.300:FF:000001">
    <property type="entry name" value="ATP-dependent zinc metalloprotease FtsH"/>
    <property type="match status" value="1"/>
</dbReference>
<dbReference type="Gene3D" id="1.10.8.60">
    <property type="match status" value="1"/>
</dbReference>
<dbReference type="Gene3D" id="3.40.50.300">
    <property type="entry name" value="P-loop containing nucleotide triphosphate hydrolases"/>
    <property type="match status" value="1"/>
</dbReference>
<dbReference type="Gene3D" id="1.20.58.760">
    <property type="entry name" value="Peptidase M41"/>
    <property type="match status" value="1"/>
</dbReference>
<dbReference type="HAMAP" id="MF_01458">
    <property type="entry name" value="FtsH"/>
    <property type="match status" value="1"/>
</dbReference>
<dbReference type="InterPro" id="IPR003593">
    <property type="entry name" value="AAA+_ATPase"/>
</dbReference>
<dbReference type="InterPro" id="IPR041569">
    <property type="entry name" value="AAA_lid_3"/>
</dbReference>
<dbReference type="InterPro" id="IPR003959">
    <property type="entry name" value="ATPase_AAA_core"/>
</dbReference>
<dbReference type="InterPro" id="IPR003960">
    <property type="entry name" value="ATPase_AAA_CS"/>
</dbReference>
<dbReference type="InterPro" id="IPR005936">
    <property type="entry name" value="FtsH"/>
</dbReference>
<dbReference type="InterPro" id="IPR027417">
    <property type="entry name" value="P-loop_NTPase"/>
</dbReference>
<dbReference type="InterPro" id="IPR011546">
    <property type="entry name" value="Pept_M41_FtsH_extracell"/>
</dbReference>
<dbReference type="InterPro" id="IPR000642">
    <property type="entry name" value="Peptidase_M41"/>
</dbReference>
<dbReference type="InterPro" id="IPR037219">
    <property type="entry name" value="Peptidase_M41-like"/>
</dbReference>
<dbReference type="NCBIfam" id="TIGR01241">
    <property type="entry name" value="FtsH_fam"/>
    <property type="match status" value="1"/>
</dbReference>
<dbReference type="PANTHER" id="PTHR23076:SF97">
    <property type="entry name" value="ATP-DEPENDENT ZINC METALLOPROTEASE YME1L1"/>
    <property type="match status" value="1"/>
</dbReference>
<dbReference type="PANTHER" id="PTHR23076">
    <property type="entry name" value="METALLOPROTEASE M41 FTSH"/>
    <property type="match status" value="1"/>
</dbReference>
<dbReference type="Pfam" id="PF00004">
    <property type="entry name" value="AAA"/>
    <property type="match status" value="1"/>
</dbReference>
<dbReference type="Pfam" id="PF17862">
    <property type="entry name" value="AAA_lid_3"/>
    <property type="match status" value="1"/>
</dbReference>
<dbReference type="Pfam" id="PF06480">
    <property type="entry name" value="FtsH_ext"/>
    <property type="match status" value="1"/>
</dbReference>
<dbReference type="Pfam" id="PF01434">
    <property type="entry name" value="Peptidase_M41"/>
    <property type="match status" value="1"/>
</dbReference>
<dbReference type="PRINTS" id="PR00830">
    <property type="entry name" value="ENDOLAPTASE"/>
</dbReference>
<dbReference type="SMART" id="SM00382">
    <property type="entry name" value="AAA"/>
    <property type="match status" value="1"/>
</dbReference>
<dbReference type="SUPFAM" id="SSF140990">
    <property type="entry name" value="FtsH protease domain-like"/>
    <property type="match status" value="1"/>
</dbReference>
<dbReference type="SUPFAM" id="SSF52540">
    <property type="entry name" value="P-loop containing nucleoside triphosphate hydrolases"/>
    <property type="match status" value="1"/>
</dbReference>
<dbReference type="PROSITE" id="PS00674">
    <property type="entry name" value="AAA"/>
    <property type="match status" value="1"/>
</dbReference>